<comment type="function">
    <text>Inhibits protein translation in cell-free systems.</text>
</comment>
<comment type="similarity">
    <text evidence="1">Belongs to the DEFL family.</text>
</comment>
<comment type="caution">
    <text evidence="2">Was initially thought to be a thionin.</text>
</comment>
<sequence>RICRRRSAGFKGPCVSNKNCAQVCMQEGWGGGNCDGPLRRCKCMRRC</sequence>
<keyword id="KW-0002">3D-structure</keyword>
<keyword id="KW-0929">Antimicrobial</keyword>
<keyword id="KW-0903">Direct protein sequencing</keyword>
<keyword id="KW-1015">Disulfide bond</keyword>
<keyword id="KW-0295">Fungicide</keyword>
<keyword id="KW-0611">Plant defense</keyword>
<proteinExistence type="evidence at protein level"/>
<evidence type="ECO:0000305" key="1"/>
<evidence type="ECO:0000305" key="2">
    <source>
    </source>
</evidence>
<evidence type="ECO:0007829" key="3">
    <source>
        <dbReference type="PDB" id="1GPT"/>
    </source>
</evidence>
<name>DEF1_HORVU</name>
<feature type="chain" id="PRO_0000074239" description="Defensin-like protein 1">
    <location>
        <begin position="1"/>
        <end position="47"/>
    </location>
</feature>
<feature type="disulfide bond">
    <location>
        <begin position="3"/>
        <end position="47"/>
    </location>
</feature>
<feature type="disulfide bond">
    <location>
        <begin position="14"/>
        <end position="34"/>
    </location>
</feature>
<feature type="disulfide bond">
    <location>
        <begin position="20"/>
        <end position="41"/>
    </location>
</feature>
<feature type="disulfide bond">
    <location>
        <begin position="24"/>
        <end position="43"/>
    </location>
</feature>
<feature type="strand" evidence="3">
    <location>
        <begin position="2"/>
        <end position="6"/>
    </location>
</feature>
<feature type="helix" evidence="3">
    <location>
        <begin position="17"/>
        <end position="27"/>
    </location>
</feature>
<feature type="strand" evidence="3">
    <location>
        <begin position="30"/>
        <end position="35"/>
    </location>
</feature>
<feature type="turn" evidence="3">
    <location>
        <begin position="36"/>
        <end position="39"/>
    </location>
</feature>
<feature type="strand" evidence="3">
    <location>
        <begin position="40"/>
        <end position="46"/>
    </location>
</feature>
<accession>P20230</accession>
<dbReference type="PIR" id="S13849">
    <property type="entry name" value="S13849"/>
</dbReference>
<dbReference type="PDB" id="1GPT">
    <property type="method" value="NMR"/>
    <property type="chains" value="A=1-47"/>
</dbReference>
<dbReference type="PDBsum" id="1GPT"/>
<dbReference type="SMR" id="P20230"/>
<dbReference type="EvolutionaryTrace" id="P20230"/>
<dbReference type="ExpressionAtlas" id="P20230">
    <property type="expression patterns" value="baseline and differential"/>
</dbReference>
<dbReference type="GO" id="GO:0050832">
    <property type="term" value="P:defense response to fungus"/>
    <property type="evidence" value="ECO:0007669"/>
    <property type="project" value="UniProtKB-KW"/>
</dbReference>
<dbReference type="GO" id="GO:0031640">
    <property type="term" value="P:killing of cells of another organism"/>
    <property type="evidence" value="ECO:0007669"/>
    <property type="project" value="UniProtKB-KW"/>
</dbReference>
<dbReference type="CDD" id="cd00107">
    <property type="entry name" value="Knot1"/>
    <property type="match status" value="1"/>
</dbReference>
<dbReference type="Gene3D" id="3.30.30.10">
    <property type="entry name" value="Knottin, scorpion toxin-like"/>
    <property type="match status" value="1"/>
</dbReference>
<dbReference type="InterPro" id="IPR008176">
    <property type="entry name" value="Defensin_plant"/>
</dbReference>
<dbReference type="InterPro" id="IPR003614">
    <property type="entry name" value="Scorpion_toxin-like"/>
</dbReference>
<dbReference type="InterPro" id="IPR036574">
    <property type="entry name" value="Scorpion_toxin-like_sf"/>
</dbReference>
<dbReference type="Pfam" id="PF00304">
    <property type="entry name" value="Gamma-thionin"/>
    <property type="match status" value="1"/>
</dbReference>
<dbReference type="PRINTS" id="PR00288">
    <property type="entry name" value="PUROTHIONIN"/>
</dbReference>
<dbReference type="SMART" id="SM00505">
    <property type="entry name" value="Knot1"/>
    <property type="match status" value="1"/>
</dbReference>
<dbReference type="SUPFAM" id="SSF57095">
    <property type="entry name" value="Scorpion toxin-like"/>
    <property type="match status" value="1"/>
</dbReference>
<dbReference type="PROSITE" id="PS00940">
    <property type="entry name" value="GAMMA_THIONIN"/>
    <property type="match status" value="1"/>
</dbReference>
<protein>
    <recommendedName>
        <fullName>Defensin-like protein 1</fullName>
    </recommendedName>
    <alternativeName>
        <fullName>Gamma-hordothionin</fullName>
    </alternativeName>
</protein>
<reference key="1">
    <citation type="journal article" date="1990" name="Eur. J. Biochem.">
        <title>Primary structure and inhibition of protein synthesis in eukaryotic cell-free system of a novel thionin, gamma-hordothionin, from barley endosperm.</title>
        <authorList>
            <person name="Mendez E."/>
            <person name="Moreno A."/>
            <person name="Colilla F.J."/>
            <person name="Pelaez F."/>
            <person name="Limas G.G."/>
            <person name="Mendez R."/>
            <person name="Soriano F."/>
            <person name="Salinas M."/>
            <person name="de Haro C."/>
        </authorList>
    </citation>
    <scope>PROTEIN SEQUENCE</scope>
    <source>
        <tissue>Endosperm</tissue>
    </source>
</reference>
<reference key="2">
    <citation type="journal article" date="1993" name="Biochemistry">
        <title>Solution structure of gamma 1-H and gamma 1-P thionins from barley and wheat endosperm determined by 1H-NMR: a structural motif common to toxic arthropod proteins.</title>
        <authorList>
            <person name="Bruix M."/>
            <person name="Jimenez M.A."/>
            <person name="Santoro J."/>
            <person name="Gonzalez C."/>
            <person name="Colilla F.J."/>
            <person name="Mendez E."/>
            <person name="Rico M."/>
        </authorList>
    </citation>
    <scope>STRUCTURE BY NMR</scope>
</reference>
<organism>
    <name type="scientific">Hordeum vulgare</name>
    <name type="common">Barley</name>
    <dbReference type="NCBI Taxonomy" id="4513"/>
    <lineage>
        <taxon>Eukaryota</taxon>
        <taxon>Viridiplantae</taxon>
        <taxon>Streptophyta</taxon>
        <taxon>Embryophyta</taxon>
        <taxon>Tracheophyta</taxon>
        <taxon>Spermatophyta</taxon>
        <taxon>Magnoliopsida</taxon>
        <taxon>Liliopsida</taxon>
        <taxon>Poales</taxon>
        <taxon>Poaceae</taxon>
        <taxon>BOP clade</taxon>
        <taxon>Pooideae</taxon>
        <taxon>Triticodae</taxon>
        <taxon>Triticeae</taxon>
        <taxon>Hordeinae</taxon>
        <taxon>Hordeum</taxon>
    </lineage>
</organism>